<gene>
    <name evidence="1" type="primary">rplR</name>
    <name type="ordered locus">Tmel_0969</name>
</gene>
<organism>
    <name type="scientific">Thermosipho melanesiensis (strain DSM 12029 / CIP 104789 / BI429)</name>
    <dbReference type="NCBI Taxonomy" id="391009"/>
    <lineage>
        <taxon>Bacteria</taxon>
        <taxon>Thermotogati</taxon>
        <taxon>Thermotogota</taxon>
        <taxon>Thermotogae</taxon>
        <taxon>Thermotogales</taxon>
        <taxon>Fervidobacteriaceae</taxon>
        <taxon>Thermosipho</taxon>
    </lineage>
</organism>
<name>RL18_THEM4</name>
<proteinExistence type="inferred from homology"/>
<reference key="1">
    <citation type="submission" date="2007-05" db="EMBL/GenBank/DDBJ databases">
        <title>Complete sequence of Thermosipho melanesiensis BI429.</title>
        <authorList>
            <consortium name="US DOE Joint Genome Institute"/>
            <person name="Copeland A."/>
            <person name="Lucas S."/>
            <person name="Lapidus A."/>
            <person name="Barry K."/>
            <person name="Glavina del Rio T."/>
            <person name="Dalin E."/>
            <person name="Tice H."/>
            <person name="Pitluck S."/>
            <person name="Chertkov O."/>
            <person name="Brettin T."/>
            <person name="Bruce D."/>
            <person name="Detter J.C."/>
            <person name="Han C."/>
            <person name="Schmutz J."/>
            <person name="Larimer F."/>
            <person name="Land M."/>
            <person name="Hauser L."/>
            <person name="Kyrpides N."/>
            <person name="Mikhailova N."/>
            <person name="Nelson K."/>
            <person name="Gogarten J.P."/>
            <person name="Noll K."/>
            <person name="Richardson P."/>
        </authorList>
    </citation>
    <scope>NUCLEOTIDE SEQUENCE [LARGE SCALE GENOMIC DNA]</scope>
    <source>
        <strain>DSM 12029 / CIP 104789 / BI429</strain>
    </source>
</reference>
<dbReference type="EMBL" id="CP000716">
    <property type="protein sequence ID" value="ABR30830.1"/>
    <property type="molecule type" value="Genomic_DNA"/>
</dbReference>
<dbReference type="RefSeq" id="WP_012057191.1">
    <property type="nucleotide sequence ID" value="NC_009616.1"/>
</dbReference>
<dbReference type="SMR" id="A6LLM9"/>
<dbReference type="STRING" id="391009.Tmel_0969"/>
<dbReference type="KEGG" id="tme:Tmel_0969"/>
<dbReference type="eggNOG" id="COG0256">
    <property type="taxonomic scope" value="Bacteria"/>
</dbReference>
<dbReference type="HOGENOM" id="CLU_098841_0_1_0"/>
<dbReference type="OrthoDB" id="9810939at2"/>
<dbReference type="Proteomes" id="UP000001110">
    <property type="component" value="Chromosome"/>
</dbReference>
<dbReference type="GO" id="GO:0022625">
    <property type="term" value="C:cytosolic large ribosomal subunit"/>
    <property type="evidence" value="ECO:0007669"/>
    <property type="project" value="TreeGrafter"/>
</dbReference>
<dbReference type="GO" id="GO:0008097">
    <property type="term" value="F:5S rRNA binding"/>
    <property type="evidence" value="ECO:0007669"/>
    <property type="project" value="TreeGrafter"/>
</dbReference>
<dbReference type="GO" id="GO:0003735">
    <property type="term" value="F:structural constituent of ribosome"/>
    <property type="evidence" value="ECO:0007669"/>
    <property type="project" value="InterPro"/>
</dbReference>
<dbReference type="GO" id="GO:0006412">
    <property type="term" value="P:translation"/>
    <property type="evidence" value="ECO:0007669"/>
    <property type="project" value="UniProtKB-UniRule"/>
</dbReference>
<dbReference type="CDD" id="cd00432">
    <property type="entry name" value="Ribosomal_L18_L5e"/>
    <property type="match status" value="1"/>
</dbReference>
<dbReference type="FunFam" id="3.30.420.100:FF:000001">
    <property type="entry name" value="50S ribosomal protein L18"/>
    <property type="match status" value="1"/>
</dbReference>
<dbReference type="Gene3D" id="3.30.420.100">
    <property type="match status" value="1"/>
</dbReference>
<dbReference type="HAMAP" id="MF_01337_B">
    <property type="entry name" value="Ribosomal_uL18_B"/>
    <property type="match status" value="1"/>
</dbReference>
<dbReference type="InterPro" id="IPR004389">
    <property type="entry name" value="Ribosomal_uL18_bac-type"/>
</dbReference>
<dbReference type="InterPro" id="IPR005484">
    <property type="entry name" value="Ribosomal_uL18_bac/euk"/>
</dbReference>
<dbReference type="NCBIfam" id="TIGR00060">
    <property type="entry name" value="L18_bact"/>
    <property type="match status" value="1"/>
</dbReference>
<dbReference type="PANTHER" id="PTHR12899">
    <property type="entry name" value="39S RIBOSOMAL PROTEIN L18, MITOCHONDRIAL"/>
    <property type="match status" value="1"/>
</dbReference>
<dbReference type="PANTHER" id="PTHR12899:SF3">
    <property type="entry name" value="LARGE RIBOSOMAL SUBUNIT PROTEIN UL18M"/>
    <property type="match status" value="1"/>
</dbReference>
<dbReference type="Pfam" id="PF00861">
    <property type="entry name" value="Ribosomal_L18p"/>
    <property type="match status" value="1"/>
</dbReference>
<dbReference type="SUPFAM" id="SSF53137">
    <property type="entry name" value="Translational machinery components"/>
    <property type="match status" value="1"/>
</dbReference>
<evidence type="ECO:0000255" key="1">
    <source>
        <dbReference type="HAMAP-Rule" id="MF_01337"/>
    </source>
</evidence>
<evidence type="ECO:0000305" key="2"/>
<comment type="function">
    <text evidence="1">This is one of the proteins that bind and probably mediate the attachment of the 5S RNA into the large ribosomal subunit, where it forms part of the central protuberance.</text>
</comment>
<comment type="subunit">
    <text evidence="1">Part of the 50S ribosomal subunit; part of the 5S rRNA/L5/L18/L25 subcomplex. Contacts the 5S and 23S rRNAs.</text>
</comment>
<comment type="similarity">
    <text evidence="1">Belongs to the universal ribosomal protein uL18 family.</text>
</comment>
<sequence>MIKKENRNWRRKKRHLSIRKKIYGTVERPRLCVYKSEKHIYAQIIDDDKGHTLVAASTLDKELRETLKKTWNKEAAREVGKLIGKRAIEKGIKKVVFDRGGYRYHGRVAELAEGAREAGLEF</sequence>
<keyword id="KW-0687">Ribonucleoprotein</keyword>
<keyword id="KW-0689">Ribosomal protein</keyword>
<keyword id="KW-0694">RNA-binding</keyword>
<keyword id="KW-0699">rRNA-binding</keyword>
<feature type="chain" id="PRO_1000053131" description="Large ribosomal subunit protein uL18">
    <location>
        <begin position="1"/>
        <end position="122"/>
    </location>
</feature>
<protein>
    <recommendedName>
        <fullName evidence="1">Large ribosomal subunit protein uL18</fullName>
    </recommendedName>
    <alternativeName>
        <fullName evidence="2">50S ribosomal protein L18</fullName>
    </alternativeName>
</protein>
<accession>A6LLM9</accession>